<organism>
    <name type="scientific">Staphylococcus aureus (strain Mu50 / ATCC 700699)</name>
    <dbReference type="NCBI Taxonomy" id="158878"/>
    <lineage>
        <taxon>Bacteria</taxon>
        <taxon>Bacillati</taxon>
        <taxon>Bacillota</taxon>
        <taxon>Bacilli</taxon>
        <taxon>Bacillales</taxon>
        <taxon>Staphylococcaceae</taxon>
        <taxon>Staphylococcus</taxon>
    </lineage>
</organism>
<accession>P0A0P3</accession>
<accession>P45557</accession>
<name>PRMA_STAAM</name>
<proteinExistence type="inferred from homology"/>
<gene>
    <name evidence="1" type="primary">prmA</name>
    <name type="ordered locus">SAV1578</name>
</gene>
<comment type="function">
    <text evidence="1">Methylates ribosomal protein L11.</text>
</comment>
<comment type="catalytic activity">
    <reaction evidence="1">
        <text>L-lysyl-[protein] + 3 S-adenosyl-L-methionine = N(6),N(6),N(6)-trimethyl-L-lysyl-[protein] + 3 S-adenosyl-L-homocysteine + 3 H(+)</text>
        <dbReference type="Rhea" id="RHEA:54192"/>
        <dbReference type="Rhea" id="RHEA-COMP:9752"/>
        <dbReference type="Rhea" id="RHEA-COMP:13826"/>
        <dbReference type="ChEBI" id="CHEBI:15378"/>
        <dbReference type="ChEBI" id="CHEBI:29969"/>
        <dbReference type="ChEBI" id="CHEBI:57856"/>
        <dbReference type="ChEBI" id="CHEBI:59789"/>
        <dbReference type="ChEBI" id="CHEBI:61961"/>
    </reaction>
</comment>
<comment type="subcellular location">
    <subcellularLocation>
        <location evidence="1">Cytoplasm</location>
    </subcellularLocation>
</comment>
<comment type="similarity">
    <text evidence="1 2">Belongs to the methyltransferase superfamily. PrmA family.</text>
</comment>
<reference key="1">
    <citation type="journal article" date="2001" name="Lancet">
        <title>Whole genome sequencing of meticillin-resistant Staphylococcus aureus.</title>
        <authorList>
            <person name="Kuroda M."/>
            <person name="Ohta T."/>
            <person name="Uchiyama I."/>
            <person name="Baba T."/>
            <person name="Yuzawa H."/>
            <person name="Kobayashi I."/>
            <person name="Cui L."/>
            <person name="Oguchi A."/>
            <person name="Aoki K."/>
            <person name="Nagai Y."/>
            <person name="Lian J.-Q."/>
            <person name="Ito T."/>
            <person name="Kanamori M."/>
            <person name="Matsumaru H."/>
            <person name="Maruyama A."/>
            <person name="Murakami H."/>
            <person name="Hosoyama A."/>
            <person name="Mizutani-Ui Y."/>
            <person name="Takahashi N.K."/>
            <person name="Sawano T."/>
            <person name="Inoue R."/>
            <person name="Kaito C."/>
            <person name="Sekimizu K."/>
            <person name="Hirakawa H."/>
            <person name="Kuhara S."/>
            <person name="Goto S."/>
            <person name="Yabuzaki J."/>
            <person name="Kanehisa M."/>
            <person name="Yamashita A."/>
            <person name="Oshima K."/>
            <person name="Furuya K."/>
            <person name="Yoshino C."/>
            <person name="Shiba T."/>
            <person name="Hattori M."/>
            <person name="Ogasawara N."/>
            <person name="Hayashi H."/>
            <person name="Hiramatsu K."/>
        </authorList>
    </citation>
    <scope>NUCLEOTIDE SEQUENCE [LARGE SCALE GENOMIC DNA]</scope>
    <source>
        <strain>Mu50 / ATCC 700699</strain>
    </source>
</reference>
<dbReference type="EC" id="2.1.1.-" evidence="1"/>
<dbReference type="EMBL" id="BA000017">
    <property type="protein sequence ID" value="BAB57740.1"/>
    <property type="molecule type" value="Genomic_DNA"/>
</dbReference>
<dbReference type="RefSeq" id="WP_001104607.1">
    <property type="nucleotide sequence ID" value="NC_002758.2"/>
</dbReference>
<dbReference type="SMR" id="P0A0P3"/>
<dbReference type="KEGG" id="sav:SAV1578"/>
<dbReference type="HOGENOM" id="CLU_049382_0_1_9"/>
<dbReference type="PhylomeDB" id="P0A0P3"/>
<dbReference type="Proteomes" id="UP000002481">
    <property type="component" value="Chromosome"/>
</dbReference>
<dbReference type="GO" id="GO:0005737">
    <property type="term" value="C:cytoplasm"/>
    <property type="evidence" value="ECO:0007669"/>
    <property type="project" value="UniProtKB-SubCell"/>
</dbReference>
<dbReference type="GO" id="GO:0016279">
    <property type="term" value="F:protein-lysine N-methyltransferase activity"/>
    <property type="evidence" value="ECO:0007669"/>
    <property type="project" value="RHEA"/>
</dbReference>
<dbReference type="GO" id="GO:0032259">
    <property type="term" value="P:methylation"/>
    <property type="evidence" value="ECO:0007669"/>
    <property type="project" value="UniProtKB-KW"/>
</dbReference>
<dbReference type="CDD" id="cd02440">
    <property type="entry name" value="AdoMet_MTases"/>
    <property type="match status" value="1"/>
</dbReference>
<dbReference type="Gene3D" id="3.40.50.150">
    <property type="entry name" value="Vaccinia Virus protein VP39"/>
    <property type="match status" value="1"/>
</dbReference>
<dbReference type="HAMAP" id="MF_00735">
    <property type="entry name" value="Methyltr_PrmA"/>
    <property type="match status" value="1"/>
</dbReference>
<dbReference type="InterPro" id="IPR050078">
    <property type="entry name" value="Ribosomal_L11_MeTrfase_PrmA"/>
</dbReference>
<dbReference type="InterPro" id="IPR004498">
    <property type="entry name" value="Ribosomal_PrmA_MeTrfase"/>
</dbReference>
<dbReference type="InterPro" id="IPR029063">
    <property type="entry name" value="SAM-dependent_MTases_sf"/>
</dbReference>
<dbReference type="NCBIfam" id="TIGR00406">
    <property type="entry name" value="prmA"/>
    <property type="match status" value="1"/>
</dbReference>
<dbReference type="PANTHER" id="PTHR43648">
    <property type="entry name" value="ELECTRON TRANSFER FLAVOPROTEIN BETA SUBUNIT LYSINE METHYLTRANSFERASE"/>
    <property type="match status" value="1"/>
</dbReference>
<dbReference type="PANTHER" id="PTHR43648:SF1">
    <property type="entry name" value="ELECTRON TRANSFER FLAVOPROTEIN BETA SUBUNIT LYSINE METHYLTRANSFERASE"/>
    <property type="match status" value="1"/>
</dbReference>
<dbReference type="Pfam" id="PF06325">
    <property type="entry name" value="PrmA"/>
    <property type="match status" value="1"/>
</dbReference>
<dbReference type="PIRSF" id="PIRSF000401">
    <property type="entry name" value="RPL11_MTase"/>
    <property type="match status" value="1"/>
</dbReference>
<dbReference type="SUPFAM" id="SSF53335">
    <property type="entry name" value="S-adenosyl-L-methionine-dependent methyltransferases"/>
    <property type="match status" value="1"/>
</dbReference>
<keyword id="KW-0963">Cytoplasm</keyword>
<keyword id="KW-0489">Methyltransferase</keyword>
<keyword id="KW-0949">S-adenosyl-L-methionine</keyword>
<keyword id="KW-0346">Stress response</keyword>
<keyword id="KW-0808">Transferase</keyword>
<evidence type="ECO:0000255" key="1">
    <source>
        <dbReference type="HAMAP-Rule" id="MF_00735"/>
    </source>
</evidence>
<evidence type="ECO:0000305" key="2"/>
<protein>
    <recommendedName>
        <fullName evidence="1">Ribosomal protein L11 methyltransferase</fullName>
        <shortName evidence="1">L11 Mtase</shortName>
        <ecNumber evidence="1">2.1.1.-</ecNumber>
    </recommendedName>
</protein>
<feature type="chain" id="PRO_0000192303" description="Ribosomal protein L11 methyltransferase">
    <location>
        <begin position="1"/>
        <end position="312"/>
    </location>
</feature>
<feature type="binding site" evidence="1">
    <location>
        <position position="160"/>
    </location>
    <ligand>
        <name>S-adenosyl-L-methionine</name>
        <dbReference type="ChEBI" id="CHEBI:59789"/>
    </ligand>
</feature>
<feature type="binding site" evidence="1">
    <location>
        <position position="181"/>
    </location>
    <ligand>
        <name>S-adenosyl-L-methionine</name>
        <dbReference type="ChEBI" id="CHEBI:59789"/>
    </ligand>
</feature>
<feature type="binding site" evidence="1">
    <location>
        <position position="203"/>
    </location>
    <ligand>
        <name>S-adenosyl-L-methionine</name>
        <dbReference type="ChEBI" id="CHEBI:59789"/>
    </ligand>
</feature>
<feature type="binding site" evidence="1">
    <location>
        <position position="246"/>
    </location>
    <ligand>
        <name>S-adenosyl-L-methionine</name>
        <dbReference type="ChEBI" id="CHEBI:59789"/>
    </ligand>
</feature>
<sequence>MNWTELSIIINHEAVELATNILENHGSNGVVIEDSDDLINQPEDKYGEIYALKKEDYPDKGVRLKAYFNEMTYDDKLRQQIKDELLNLDELDQHNIQFSEQIIAETDWENEWKNYFHPFRASKKFTIVPSWETYAKEADEELCIELDPGMAFGTGDHPTTSMCLKAIETYVLPQHSVIDVGTGSGILSIASHLIGVKRIKALDIDEMAVSVAKENFRRNHCETLIEAVPGNLLKDETEKFDIVIANILAHIIDEMIEDAYNTLNEGGYFITSGIIKEKYEGIQSHMERVGFKIISEQHDNGWVCLVGQKVSE</sequence>